<accession>P83834</accession>
<protein>
    <recommendedName>
        <fullName>Pathogenesis-related protein</fullName>
    </recommendedName>
    <alternativeName>
        <fullName>PR-1</fullName>
    </alternativeName>
    <allergenName>Cuc m 3</allergenName>
</protein>
<feature type="chain" id="PRO_0000211548" description="Pathogenesis-related protein">
    <location>
        <begin position="1" status="less than"/>
        <end position="41" status="greater than"/>
    </location>
</feature>
<feature type="non-consecutive residues" evidence="3">
    <location>
        <begin position="21"/>
        <end position="22"/>
    </location>
</feature>
<feature type="non-consecutive residues" evidence="3">
    <location>
        <begin position="31"/>
        <end position="32"/>
    </location>
</feature>
<feature type="non-terminal residue" evidence="3">
    <location>
        <position position="1"/>
    </location>
</feature>
<feature type="non-terminal residue" evidence="3">
    <location>
        <position position="41"/>
    </location>
</feature>
<dbReference type="SMR" id="P83834"/>
<dbReference type="Allergome" id="1330">
    <property type="allergen name" value="Cuc m 3"/>
</dbReference>
<dbReference type="Allergome" id="3231">
    <property type="allergen name" value="Cuc m 3.0101"/>
</dbReference>
<dbReference type="InParanoid" id="P83834"/>
<dbReference type="Proteomes" id="UP000089565">
    <property type="component" value="Unplaced"/>
</dbReference>
<dbReference type="Proteomes" id="UP000596662">
    <property type="component" value="Unplaced"/>
</dbReference>
<dbReference type="GO" id="GO:0006952">
    <property type="term" value="P:defense response"/>
    <property type="evidence" value="ECO:0007669"/>
    <property type="project" value="UniProtKB-KW"/>
</dbReference>
<dbReference type="InterPro" id="IPR035940">
    <property type="entry name" value="CAP_sf"/>
</dbReference>
<dbReference type="SUPFAM" id="SSF55797">
    <property type="entry name" value="PR-1-like"/>
    <property type="match status" value="1"/>
</dbReference>
<keyword id="KW-0020">Allergen</keyword>
<keyword id="KW-0903">Direct protein sequencing</keyword>
<keyword id="KW-0568">Pathogenesis-related protein</keyword>
<keyword id="KW-0611">Plant defense</keyword>
<keyword id="KW-1185">Reference proteome</keyword>
<comment type="function">
    <text evidence="1">Probably involved in the defense reaction of plants against pathogens.</text>
</comment>
<comment type="mass spectrometry"/>
<comment type="allergen">
    <text evidence="2">Causes an allergic reaction in human. A minor allergen. Binds to IgE from the serum of melon allergic patients.</text>
</comment>
<comment type="similarity">
    <text evidence="3">Belongs to the CRISP family.</text>
</comment>
<organism evidence="3">
    <name type="scientific">Cucumis melo</name>
    <name type="common">Muskmelon</name>
    <dbReference type="NCBI Taxonomy" id="3656"/>
    <lineage>
        <taxon>Eukaryota</taxon>
        <taxon>Viridiplantae</taxon>
        <taxon>Streptophyta</taxon>
        <taxon>Embryophyta</taxon>
        <taxon>Tracheophyta</taxon>
        <taxon>Spermatophyta</taxon>
        <taxon>Magnoliopsida</taxon>
        <taxon>eudicotyledons</taxon>
        <taxon>Gunneridae</taxon>
        <taxon>Pentapetalae</taxon>
        <taxon>rosids</taxon>
        <taxon>fabids</taxon>
        <taxon>Cucurbitales</taxon>
        <taxon>Cucurbitaceae</taxon>
        <taxon>Benincaseae</taxon>
        <taxon>Cucumis</taxon>
    </lineage>
</organism>
<name>PR1_CUCME</name>
<sequence>DFVDAHNAARAQVGVGPVHWTVDAYARQYANDRNLVHSATR</sequence>
<proteinExistence type="evidence at protein level"/>
<reference key="1">
    <citation type="journal article" date="2004" name="J. Allergy Clin. Immunol.">
        <title>Novel plant pathogenesis-related protein family involved in food allergy.</title>
        <authorList>
            <person name="Asensio T."/>
            <person name="Crespo J.F."/>
            <person name="Sanchez-Monge R."/>
            <person name="Lopez-Torrejon G."/>
            <person name="Somoza M.L."/>
            <person name="Rodriguez J."/>
            <person name="Salcedo G."/>
        </authorList>
    </citation>
    <scope>PROTEIN SEQUENCE</scope>
    <scope>MASS SPECTROMETRY</scope>
    <scope>ALLERGEN</scope>
    <source>
        <strain>cv. Piel de Sapo</strain>
        <tissue>Fruit</tissue>
    </source>
</reference>
<evidence type="ECO:0000250" key="1">
    <source>
        <dbReference type="UniProtKB" id="P08299"/>
    </source>
</evidence>
<evidence type="ECO:0000269" key="2">
    <source>
    </source>
</evidence>
<evidence type="ECO:0000305" key="3"/>